<gene>
    <name evidence="1" type="primary">proS</name>
    <name type="ordered locus">RHE_CH01623</name>
</gene>
<keyword id="KW-0030">Aminoacyl-tRNA synthetase</keyword>
<keyword id="KW-0067">ATP-binding</keyword>
<keyword id="KW-0963">Cytoplasm</keyword>
<keyword id="KW-0436">Ligase</keyword>
<keyword id="KW-0547">Nucleotide-binding</keyword>
<keyword id="KW-0648">Protein biosynthesis</keyword>
<keyword id="KW-1185">Reference proteome</keyword>
<evidence type="ECO:0000255" key="1">
    <source>
        <dbReference type="HAMAP-Rule" id="MF_01570"/>
    </source>
</evidence>
<evidence type="ECO:0000305" key="2"/>
<feature type="chain" id="PRO_0000248906" description="Proline--tRNA ligase">
    <location>
        <begin position="1"/>
        <end position="440"/>
    </location>
</feature>
<sequence>MRLSRYFMPILKENPKEAEIVSHRLMLRAGMIRQQSQGIYSWLPLGKRVLDKVNAIIREEQNRAGAIELSMPTLQSAELWQESGRYDAYGKEMLRIKDRQDRPMLYGPTNEEMVTDIFRSSVKSYKDLPLNLYHIQLKFRDEIRPRFGTMRSREFMMKDAYSFDLTREGAEHSYNKMFAAYLRTFERLGLRAIPMRADTGPIGGNLSHEFIILADTGESEVFCHKDFVGFDIPGENTDFDSVEGLKAIFDKWTSLYAATSEMHDEAAFNAVPEGDRLSARGIEVGHIFYFGTKYSEPMGAKVQGPDGKEHFVHMGSYGIGPTRLVPAIIEASHDDNGIIWPASVAPFDVVVINMKVGDQACDDTCELIYAALKKAGKDVLYDDTDDRAGTKFATADLIGVPVQIIAGPRAVANGEVEVKDRKTGARETMTIEAAINRFVA</sequence>
<protein>
    <recommendedName>
        <fullName evidence="1">Proline--tRNA ligase</fullName>
        <ecNumber evidence="1">6.1.1.15</ecNumber>
    </recommendedName>
    <alternativeName>
        <fullName evidence="1">Prolyl-tRNA synthetase</fullName>
        <shortName evidence="1">ProRS</shortName>
    </alternativeName>
</protein>
<comment type="function">
    <text evidence="1">Catalyzes the attachment of proline to tRNA(Pro) in a two-step reaction: proline is first activated by ATP to form Pro-AMP and then transferred to the acceptor end of tRNA(Pro).</text>
</comment>
<comment type="catalytic activity">
    <reaction evidence="1">
        <text>tRNA(Pro) + L-proline + ATP = L-prolyl-tRNA(Pro) + AMP + diphosphate</text>
        <dbReference type="Rhea" id="RHEA:14305"/>
        <dbReference type="Rhea" id="RHEA-COMP:9700"/>
        <dbReference type="Rhea" id="RHEA-COMP:9702"/>
        <dbReference type="ChEBI" id="CHEBI:30616"/>
        <dbReference type="ChEBI" id="CHEBI:33019"/>
        <dbReference type="ChEBI" id="CHEBI:60039"/>
        <dbReference type="ChEBI" id="CHEBI:78442"/>
        <dbReference type="ChEBI" id="CHEBI:78532"/>
        <dbReference type="ChEBI" id="CHEBI:456215"/>
        <dbReference type="EC" id="6.1.1.15"/>
    </reaction>
</comment>
<comment type="subunit">
    <text evidence="1">Homodimer.</text>
</comment>
<comment type="subcellular location">
    <subcellularLocation>
        <location evidence="1">Cytoplasm</location>
    </subcellularLocation>
</comment>
<comment type="similarity">
    <text evidence="1">Belongs to the class-II aminoacyl-tRNA synthetase family. ProS type 2 subfamily.</text>
</comment>
<comment type="sequence caution" evidence="2">
    <conflict type="erroneous initiation">
        <sequence resource="EMBL-CDS" id="ABC90422"/>
    </conflict>
</comment>
<proteinExistence type="inferred from homology"/>
<accession>Q2K9R4</accession>
<dbReference type="EC" id="6.1.1.15" evidence="1"/>
<dbReference type="EMBL" id="CP000133">
    <property type="protein sequence ID" value="ABC90422.1"/>
    <property type="status" value="ALT_INIT"/>
    <property type="molecule type" value="Genomic_DNA"/>
</dbReference>
<dbReference type="RefSeq" id="WP_011424940.1">
    <property type="nucleotide sequence ID" value="NC_007761.1"/>
</dbReference>
<dbReference type="SMR" id="Q2K9R4"/>
<dbReference type="KEGG" id="ret:RHE_CH01623"/>
<dbReference type="eggNOG" id="COG0442">
    <property type="taxonomic scope" value="Bacteria"/>
</dbReference>
<dbReference type="HOGENOM" id="CLU_016739_4_2_5"/>
<dbReference type="OrthoDB" id="9809052at2"/>
<dbReference type="Proteomes" id="UP000001936">
    <property type="component" value="Chromosome"/>
</dbReference>
<dbReference type="GO" id="GO:0005829">
    <property type="term" value="C:cytosol"/>
    <property type="evidence" value="ECO:0007669"/>
    <property type="project" value="TreeGrafter"/>
</dbReference>
<dbReference type="GO" id="GO:0005524">
    <property type="term" value="F:ATP binding"/>
    <property type="evidence" value="ECO:0007669"/>
    <property type="project" value="UniProtKB-UniRule"/>
</dbReference>
<dbReference type="GO" id="GO:0004827">
    <property type="term" value="F:proline-tRNA ligase activity"/>
    <property type="evidence" value="ECO:0007669"/>
    <property type="project" value="UniProtKB-UniRule"/>
</dbReference>
<dbReference type="GO" id="GO:0006433">
    <property type="term" value="P:prolyl-tRNA aminoacylation"/>
    <property type="evidence" value="ECO:0007669"/>
    <property type="project" value="UniProtKB-UniRule"/>
</dbReference>
<dbReference type="CDD" id="cd00861">
    <property type="entry name" value="ProRS_anticodon_short"/>
    <property type="match status" value="1"/>
</dbReference>
<dbReference type="CDD" id="cd00779">
    <property type="entry name" value="ProRS_core_prok"/>
    <property type="match status" value="1"/>
</dbReference>
<dbReference type="FunFam" id="3.30.930.10:FF:000042">
    <property type="entry name" value="probable proline--tRNA ligase, mitochondrial"/>
    <property type="match status" value="1"/>
</dbReference>
<dbReference type="FunFam" id="3.40.50.800:FF:000032">
    <property type="entry name" value="Proline--tRNA ligase"/>
    <property type="match status" value="1"/>
</dbReference>
<dbReference type="Gene3D" id="3.40.50.800">
    <property type="entry name" value="Anticodon-binding domain"/>
    <property type="match status" value="1"/>
</dbReference>
<dbReference type="Gene3D" id="3.30.930.10">
    <property type="entry name" value="Bira Bifunctional Protein, Domain 2"/>
    <property type="match status" value="1"/>
</dbReference>
<dbReference type="HAMAP" id="MF_01570">
    <property type="entry name" value="Pro_tRNA_synth_type2"/>
    <property type="match status" value="1"/>
</dbReference>
<dbReference type="InterPro" id="IPR002314">
    <property type="entry name" value="aa-tRNA-synt_IIb"/>
</dbReference>
<dbReference type="InterPro" id="IPR006195">
    <property type="entry name" value="aa-tRNA-synth_II"/>
</dbReference>
<dbReference type="InterPro" id="IPR045864">
    <property type="entry name" value="aa-tRNA-synth_II/BPL/LPL"/>
</dbReference>
<dbReference type="InterPro" id="IPR004154">
    <property type="entry name" value="Anticodon-bd"/>
</dbReference>
<dbReference type="InterPro" id="IPR036621">
    <property type="entry name" value="Anticodon-bd_dom_sf"/>
</dbReference>
<dbReference type="InterPro" id="IPR002316">
    <property type="entry name" value="Pro-tRNA-ligase_IIa"/>
</dbReference>
<dbReference type="InterPro" id="IPR004500">
    <property type="entry name" value="Pro-tRNA-synth_IIa_bac-type"/>
</dbReference>
<dbReference type="InterPro" id="IPR050062">
    <property type="entry name" value="Pro-tRNA_synthetase"/>
</dbReference>
<dbReference type="InterPro" id="IPR023716">
    <property type="entry name" value="Prolyl-tRNA_ligase_IIa_type2"/>
</dbReference>
<dbReference type="InterPro" id="IPR044140">
    <property type="entry name" value="ProRS_anticodon_short"/>
</dbReference>
<dbReference type="InterPro" id="IPR033730">
    <property type="entry name" value="ProRS_core_prok"/>
</dbReference>
<dbReference type="NCBIfam" id="NF008979">
    <property type="entry name" value="PRK12325.1"/>
    <property type="match status" value="1"/>
</dbReference>
<dbReference type="NCBIfam" id="TIGR00409">
    <property type="entry name" value="proS_fam_II"/>
    <property type="match status" value="1"/>
</dbReference>
<dbReference type="PANTHER" id="PTHR42753">
    <property type="entry name" value="MITOCHONDRIAL RIBOSOME PROTEIN L39/PROLYL-TRNA LIGASE FAMILY MEMBER"/>
    <property type="match status" value="1"/>
</dbReference>
<dbReference type="PANTHER" id="PTHR42753:SF2">
    <property type="entry name" value="PROLINE--TRNA LIGASE"/>
    <property type="match status" value="1"/>
</dbReference>
<dbReference type="Pfam" id="PF03129">
    <property type="entry name" value="HGTP_anticodon"/>
    <property type="match status" value="1"/>
</dbReference>
<dbReference type="Pfam" id="PF00587">
    <property type="entry name" value="tRNA-synt_2b"/>
    <property type="match status" value="1"/>
</dbReference>
<dbReference type="PRINTS" id="PR01046">
    <property type="entry name" value="TRNASYNTHPRO"/>
</dbReference>
<dbReference type="SUPFAM" id="SSF52954">
    <property type="entry name" value="Class II aaRS ABD-related"/>
    <property type="match status" value="1"/>
</dbReference>
<dbReference type="SUPFAM" id="SSF55681">
    <property type="entry name" value="Class II aaRS and biotin synthetases"/>
    <property type="match status" value="1"/>
</dbReference>
<dbReference type="PROSITE" id="PS50862">
    <property type="entry name" value="AA_TRNA_LIGASE_II"/>
    <property type="match status" value="1"/>
</dbReference>
<name>SYP_RHIEC</name>
<organism>
    <name type="scientific">Rhizobium etli (strain ATCC 51251 / DSM 11541 / JCM 21823 / NBRC 15573 / CFN 42)</name>
    <dbReference type="NCBI Taxonomy" id="347834"/>
    <lineage>
        <taxon>Bacteria</taxon>
        <taxon>Pseudomonadati</taxon>
        <taxon>Pseudomonadota</taxon>
        <taxon>Alphaproteobacteria</taxon>
        <taxon>Hyphomicrobiales</taxon>
        <taxon>Rhizobiaceae</taxon>
        <taxon>Rhizobium/Agrobacterium group</taxon>
        <taxon>Rhizobium</taxon>
    </lineage>
</organism>
<reference key="1">
    <citation type="journal article" date="2006" name="Proc. Natl. Acad. Sci. U.S.A.">
        <title>The partitioned Rhizobium etli genome: genetic and metabolic redundancy in seven interacting replicons.</title>
        <authorList>
            <person name="Gonzalez V."/>
            <person name="Santamaria R.I."/>
            <person name="Bustos P."/>
            <person name="Hernandez-Gonzalez I."/>
            <person name="Medrano-Soto A."/>
            <person name="Moreno-Hagelsieb G."/>
            <person name="Janga S.C."/>
            <person name="Ramirez M.A."/>
            <person name="Jimenez-Jacinto V."/>
            <person name="Collado-Vides J."/>
            <person name="Davila G."/>
        </authorList>
    </citation>
    <scope>NUCLEOTIDE SEQUENCE [LARGE SCALE GENOMIC DNA]</scope>
    <source>
        <strain>ATCC 51251 / DSM 11541 / JCM 21823 / NBRC 15573 / CFN 42</strain>
    </source>
</reference>